<accession>Q7RVQ8</accession>
<accession>Q9HFS6</accession>
<evidence type="ECO:0000250" key="1"/>
<evidence type="ECO:0000255" key="2">
    <source>
        <dbReference type="PROSITE-ProRule" id="PRU00042"/>
    </source>
</evidence>
<evidence type="ECO:0000256" key="3">
    <source>
        <dbReference type="SAM" id="MobiDB-lite"/>
    </source>
</evidence>
<evidence type="ECO:0000305" key="4"/>
<protein>
    <recommendedName>
        <fullName>pH-response transcription factor pacc-1</fullName>
    </recommendedName>
</protein>
<sequence>MSSTPAQENGTVNGANAAPAPAPAQTTPTPAPATAATPTTAPAASANGTAANAMKPEASSNSSNSASNGTTPAPSTTPTTASNSSAPAAAQDESLVCRWAECNERFTSAEVLYEHICEKHVGRKSTNNLNLTCQWNSCRTTTVKRDHITSHVRVHVPLKPHKCDFCGKCFKRPQDLKKHVKTHADDSVLVGRSPQDQNGGMNGAYRAQAPVHKAPSGFYDHNGHMRGTNQVPFGQPHQNGQASYYHAQYPASQPYHAPMYYPAQTMGGQRNDFTGHQAAPFDARKRQFDDLNDFFGSVKRRQINPTSYESVGRALMPLHAPLGLHSGGLATEYMAQPPHTLGMASAHHPLTQHYYLPPMPNLRTKEDLQQMDHFLEQMQATVYENTAVDMRHHSPTYATRPSIDPYHGASLASPLSATSPHSAGTPAVTPTPSNMSYTSGHSPSTSSTSLSPTSRHSSTPSVSYPTLPSRPGLPYPSTSGLGSNFTHNERRLSGGVLQSARRAADEADRAPTPKASEQATVSSPSEDSETGDVNGPETYDDWLQHMRVIEYLRQGIRARLERQDFDEDDTSRIDPMVLESSDRNQQQRNQQQQQQKSPNEPTAAGPSAPEKPLYPVLPRIN</sequence>
<feature type="chain" id="PRO_0000046838" description="pH-response transcription factor pacc-1">
    <location>
        <begin position="1"/>
        <end position="621"/>
    </location>
</feature>
<feature type="zinc finger region" description="C2H2-type 1" evidence="2">
    <location>
        <begin position="95"/>
        <end position="120"/>
    </location>
</feature>
<feature type="zinc finger region" description="C2H2-type 2" evidence="2">
    <location>
        <begin position="131"/>
        <end position="155"/>
    </location>
</feature>
<feature type="zinc finger region" description="C2H2-type 3" evidence="2">
    <location>
        <begin position="161"/>
        <end position="183"/>
    </location>
</feature>
<feature type="region of interest" description="Disordered" evidence="3">
    <location>
        <begin position="1"/>
        <end position="87"/>
    </location>
</feature>
<feature type="region of interest" description="Disordered" evidence="3">
    <location>
        <begin position="395"/>
        <end position="539"/>
    </location>
</feature>
<feature type="region of interest" description="Disordered" evidence="3">
    <location>
        <begin position="566"/>
        <end position="621"/>
    </location>
</feature>
<feature type="short sequence motif" description="YPX[LI] motif 1">
    <location>
        <begin position="464"/>
        <end position="467"/>
    </location>
</feature>
<feature type="short sequence motif" description="YPX[LI] motif 2">
    <location>
        <begin position="614"/>
        <end position="617"/>
    </location>
</feature>
<feature type="compositionally biased region" description="Polar residues" evidence="3">
    <location>
        <begin position="1"/>
        <end position="14"/>
    </location>
</feature>
<feature type="compositionally biased region" description="Low complexity" evidence="3">
    <location>
        <begin position="15"/>
        <end position="87"/>
    </location>
</feature>
<feature type="compositionally biased region" description="Low complexity" evidence="3">
    <location>
        <begin position="409"/>
        <end position="423"/>
    </location>
</feature>
<feature type="compositionally biased region" description="Low complexity" evidence="3">
    <location>
        <begin position="436"/>
        <end position="465"/>
    </location>
</feature>
<feature type="compositionally biased region" description="Polar residues" evidence="3">
    <location>
        <begin position="476"/>
        <end position="486"/>
    </location>
</feature>
<feature type="compositionally biased region" description="Basic and acidic residues" evidence="3">
    <location>
        <begin position="502"/>
        <end position="511"/>
    </location>
</feature>
<feature type="compositionally biased region" description="Polar residues" evidence="3">
    <location>
        <begin position="515"/>
        <end position="525"/>
    </location>
</feature>
<feature type="compositionally biased region" description="Low complexity" evidence="3">
    <location>
        <begin position="583"/>
        <end position="595"/>
    </location>
</feature>
<feature type="sequence conflict" description="In Ref. 2; AAG17467." evidence="4" ref="2">
    <original>I</original>
    <variation>V</variation>
    <location>
        <position position="116"/>
    </location>
</feature>
<feature type="sequence conflict" description="In Ref. 2; AAG17467." evidence="4" ref="2">
    <original>K</original>
    <variation>R</variation>
    <location>
        <position position="119"/>
    </location>
</feature>
<keyword id="KW-0002">3D-structure</keyword>
<keyword id="KW-0010">Activator</keyword>
<keyword id="KW-0963">Cytoplasm</keyword>
<keyword id="KW-0238">DNA-binding</keyword>
<keyword id="KW-0479">Metal-binding</keyword>
<keyword id="KW-0539">Nucleus</keyword>
<keyword id="KW-1185">Reference proteome</keyword>
<keyword id="KW-0677">Repeat</keyword>
<keyword id="KW-0678">Repressor</keyword>
<keyword id="KW-0804">Transcription</keyword>
<keyword id="KW-0805">Transcription regulation</keyword>
<keyword id="KW-0862">Zinc</keyword>
<keyword id="KW-0863">Zinc-finger</keyword>
<comment type="function">
    <text evidence="1">Transcription factor that mediates regulation of both acid- and alkaline-expressed genes in response to ambient pH. At alkaline ambient pH, activates transcription of alkaline-expressed genes (including pacc-1 itself) and represses transcription of acid-expressed genes (By similarity).</text>
</comment>
<comment type="subunit">
    <text evidence="1">Binds to DNA. Interacts with palA/prr-1, which binds to the two YPX[LI] motifs and is required for proteolytic processing (By similarity).</text>
</comment>
<comment type="subcellular location">
    <subcellularLocation>
        <location evidence="1">Cytoplasm</location>
    </subcellularLocation>
    <subcellularLocation>
        <location evidence="1">Nucleus</location>
    </subcellularLocation>
</comment>
<comment type="PTM">
    <text evidence="1">Activated by C-terminal proteolytic cleavage by signaling protease (probably palB/RIM13) at neutral to alkaline ambient pH.</text>
</comment>
<comment type="similarity">
    <text evidence="4">Belongs to the pacC/RIM101 family.</text>
</comment>
<comment type="sequence caution" evidence="4">
    <conflict type="erroneous gene model prediction">
        <sequence resource="EMBL-CDS" id="AAG17467"/>
    </conflict>
</comment>
<organism>
    <name type="scientific">Neurospora crassa (strain ATCC 24698 / 74-OR23-1A / CBS 708.71 / DSM 1257 / FGSC 987)</name>
    <dbReference type="NCBI Taxonomy" id="367110"/>
    <lineage>
        <taxon>Eukaryota</taxon>
        <taxon>Fungi</taxon>
        <taxon>Dikarya</taxon>
        <taxon>Ascomycota</taxon>
        <taxon>Pezizomycotina</taxon>
        <taxon>Sordariomycetes</taxon>
        <taxon>Sordariomycetidae</taxon>
        <taxon>Sordariales</taxon>
        <taxon>Sordariaceae</taxon>
        <taxon>Neurospora</taxon>
    </lineage>
</organism>
<reference key="1">
    <citation type="journal article" date="2003" name="Nature">
        <title>The genome sequence of the filamentous fungus Neurospora crassa.</title>
        <authorList>
            <person name="Galagan J.E."/>
            <person name="Calvo S.E."/>
            <person name="Borkovich K.A."/>
            <person name="Selker E.U."/>
            <person name="Read N.D."/>
            <person name="Jaffe D.B."/>
            <person name="FitzHugh W."/>
            <person name="Ma L.-J."/>
            <person name="Smirnov S."/>
            <person name="Purcell S."/>
            <person name="Rehman B."/>
            <person name="Elkins T."/>
            <person name="Engels R."/>
            <person name="Wang S."/>
            <person name="Nielsen C.B."/>
            <person name="Butler J."/>
            <person name="Endrizzi M."/>
            <person name="Qui D."/>
            <person name="Ianakiev P."/>
            <person name="Bell-Pedersen D."/>
            <person name="Nelson M.A."/>
            <person name="Werner-Washburne M."/>
            <person name="Selitrennikoff C.P."/>
            <person name="Kinsey J.A."/>
            <person name="Braun E.L."/>
            <person name="Zelter A."/>
            <person name="Schulte U."/>
            <person name="Kothe G.O."/>
            <person name="Jedd G."/>
            <person name="Mewes H.-W."/>
            <person name="Staben C."/>
            <person name="Marcotte E."/>
            <person name="Greenberg D."/>
            <person name="Roy A."/>
            <person name="Foley K."/>
            <person name="Naylor J."/>
            <person name="Stange-Thomann N."/>
            <person name="Barrett R."/>
            <person name="Gnerre S."/>
            <person name="Kamal M."/>
            <person name="Kamvysselis M."/>
            <person name="Mauceli E.W."/>
            <person name="Bielke C."/>
            <person name="Rudd S."/>
            <person name="Frishman D."/>
            <person name="Krystofova S."/>
            <person name="Rasmussen C."/>
            <person name="Metzenberg R.L."/>
            <person name="Perkins D.D."/>
            <person name="Kroken S."/>
            <person name="Cogoni C."/>
            <person name="Macino G."/>
            <person name="Catcheside D.E.A."/>
            <person name="Li W."/>
            <person name="Pratt R.J."/>
            <person name="Osmani S.A."/>
            <person name="DeSouza C.P.C."/>
            <person name="Glass N.L."/>
            <person name="Orbach M.J."/>
            <person name="Berglund J.A."/>
            <person name="Voelker R."/>
            <person name="Yarden O."/>
            <person name="Plamann M."/>
            <person name="Seiler S."/>
            <person name="Dunlap J.C."/>
            <person name="Radford A."/>
            <person name="Aramayo R."/>
            <person name="Natvig D.O."/>
            <person name="Alex L.A."/>
            <person name="Mannhaupt G."/>
            <person name="Ebbole D.J."/>
            <person name="Freitag M."/>
            <person name="Paulsen I."/>
            <person name="Sachs M.S."/>
            <person name="Lander E.S."/>
            <person name="Nusbaum C."/>
            <person name="Birren B.W."/>
        </authorList>
    </citation>
    <scope>NUCLEOTIDE SEQUENCE [LARGE SCALE GENOMIC DNA]</scope>
    <source>
        <strain>ATCC 24698 / 74-OR23-1A / CBS 708.71 / DSM 1257 / FGSC 987</strain>
    </source>
</reference>
<reference key="2">
    <citation type="journal article" date="2003" name="Fungal Genet. Biol.">
        <title>The pH-induced glycosylation of secreted phosphatases is mediated in Aspergillus nidulans by the regulatory gene pacC-dependent pathway.</title>
        <authorList>
            <person name="Nozawa S.R."/>
            <person name="Ferreira-Nozawa M.S."/>
            <person name="Martinez-Rossi N.M."/>
            <person name="Rossi A."/>
        </authorList>
    </citation>
    <scope>NUCLEOTIDE SEQUENCE [GENOMIC DNA] OF 105-218</scope>
</reference>
<reference key="3">
    <citation type="journal article" date="2003" name="Fungal Genet. Biol.">
        <authorList>
            <person name="Nozawa S.R."/>
            <person name="Ferreira-Nozawa M.S."/>
            <person name="Martinez-Rossi N.M."/>
            <person name="Rossi A."/>
        </authorList>
    </citation>
    <scope>ERRATUM OF PUBMED:12892641</scope>
</reference>
<proteinExistence type="evidence at protein level"/>
<dbReference type="EMBL" id="CM002238">
    <property type="protein sequence ID" value="EAA27978.2"/>
    <property type="molecule type" value="Genomic_DNA"/>
</dbReference>
<dbReference type="EMBL" id="AF304568">
    <property type="protein sequence ID" value="AAG17467.1"/>
    <property type="status" value="ALT_SEQ"/>
    <property type="molecule type" value="Genomic_DNA"/>
</dbReference>
<dbReference type="RefSeq" id="XP_957214.2">
    <property type="nucleotide sequence ID" value="XM_952121.3"/>
</dbReference>
<dbReference type="PDB" id="6P6E">
    <property type="method" value="X-ray"/>
    <property type="resolution" value="1.99 A"/>
    <property type="chains" value="B/C=281-304"/>
</dbReference>
<dbReference type="PDBsum" id="6P6E"/>
<dbReference type="SMR" id="Q7RVQ8"/>
<dbReference type="STRING" id="367110.Q7RVQ8"/>
<dbReference type="PaxDb" id="5141-EFNCRP00000000438"/>
<dbReference type="EnsemblFungi" id="EAA27978">
    <property type="protein sequence ID" value="EAA27978"/>
    <property type="gene ID" value="NCU00090"/>
</dbReference>
<dbReference type="GeneID" id="3873377"/>
<dbReference type="KEGG" id="ncr:NCU00090"/>
<dbReference type="VEuPathDB" id="FungiDB:NCU00090"/>
<dbReference type="HOGENOM" id="CLU_012842_1_1_1"/>
<dbReference type="InParanoid" id="Q7RVQ8"/>
<dbReference type="OrthoDB" id="6155966at2759"/>
<dbReference type="Proteomes" id="UP000001805">
    <property type="component" value="Chromosome 3, Linkage Group III"/>
</dbReference>
<dbReference type="GO" id="GO:0005737">
    <property type="term" value="C:cytoplasm"/>
    <property type="evidence" value="ECO:0007669"/>
    <property type="project" value="UniProtKB-SubCell"/>
</dbReference>
<dbReference type="GO" id="GO:0005634">
    <property type="term" value="C:nucleus"/>
    <property type="evidence" value="ECO:0000318"/>
    <property type="project" value="GO_Central"/>
</dbReference>
<dbReference type="GO" id="GO:0003677">
    <property type="term" value="F:DNA binding"/>
    <property type="evidence" value="ECO:0007669"/>
    <property type="project" value="UniProtKB-KW"/>
</dbReference>
<dbReference type="GO" id="GO:0008270">
    <property type="term" value="F:zinc ion binding"/>
    <property type="evidence" value="ECO:0007669"/>
    <property type="project" value="UniProtKB-KW"/>
</dbReference>
<dbReference type="GO" id="GO:0045944">
    <property type="term" value="P:positive regulation of transcription by RNA polymerase II"/>
    <property type="evidence" value="ECO:0000318"/>
    <property type="project" value="GO_Central"/>
</dbReference>
<dbReference type="FunFam" id="3.30.160.60:FF:000458">
    <property type="entry name" value="pH-response transcription factor pacC/RIM101"/>
    <property type="match status" value="1"/>
</dbReference>
<dbReference type="FunFam" id="3.30.160.60:FF:001875">
    <property type="entry name" value="pH-response transcription factor pacC/RIM101"/>
    <property type="match status" value="1"/>
</dbReference>
<dbReference type="Gene3D" id="3.30.160.60">
    <property type="entry name" value="Classic Zinc Finger"/>
    <property type="match status" value="2"/>
</dbReference>
<dbReference type="InterPro" id="IPR050806">
    <property type="entry name" value="pacC/RIM101"/>
</dbReference>
<dbReference type="InterPro" id="IPR036236">
    <property type="entry name" value="Znf_C2H2_sf"/>
</dbReference>
<dbReference type="InterPro" id="IPR013087">
    <property type="entry name" value="Znf_C2H2_type"/>
</dbReference>
<dbReference type="PANTHER" id="PTHR47257">
    <property type="entry name" value="PH-RESPONSE TRANSCRIPTION FACTOR PACC/RIM101"/>
    <property type="match status" value="1"/>
</dbReference>
<dbReference type="PANTHER" id="PTHR47257:SF1">
    <property type="entry name" value="PH-RESPONSE TRANSCRIPTION FACTOR PACC_RIM101"/>
    <property type="match status" value="1"/>
</dbReference>
<dbReference type="SMART" id="SM00355">
    <property type="entry name" value="ZnF_C2H2"/>
    <property type="match status" value="3"/>
</dbReference>
<dbReference type="SUPFAM" id="SSF57667">
    <property type="entry name" value="beta-beta-alpha zinc fingers"/>
    <property type="match status" value="2"/>
</dbReference>
<dbReference type="PROSITE" id="PS00028">
    <property type="entry name" value="ZINC_FINGER_C2H2_1"/>
    <property type="match status" value="2"/>
</dbReference>
<dbReference type="PROSITE" id="PS50157">
    <property type="entry name" value="ZINC_FINGER_C2H2_2"/>
    <property type="match status" value="3"/>
</dbReference>
<gene>
    <name type="primary">pacc-1</name>
    <name type="ORF">NCU00090</name>
</gene>
<name>PACC_NEUCR</name>